<gene>
    <name type="primary">POLD3</name>
    <name type="synonym">KIAA0039</name>
</gene>
<dbReference type="EMBL" id="D26018">
    <property type="protein sequence ID" value="BAA05039.1"/>
    <property type="status" value="ALT_INIT"/>
    <property type="molecule type" value="mRNA"/>
</dbReference>
<dbReference type="EMBL" id="AK316301">
    <property type="protein sequence ID" value="BAH14672.1"/>
    <property type="molecule type" value="mRNA"/>
</dbReference>
<dbReference type="EMBL" id="AP001104">
    <property type="status" value="NOT_ANNOTATED_CDS"/>
    <property type="molecule type" value="Genomic_DNA"/>
</dbReference>
<dbReference type="EMBL" id="AP001324">
    <property type="status" value="NOT_ANNOTATED_CDS"/>
    <property type="molecule type" value="Genomic_DNA"/>
</dbReference>
<dbReference type="EMBL" id="AP001372">
    <property type="status" value="NOT_ANNOTATED_CDS"/>
    <property type="molecule type" value="Genomic_DNA"/>
</dbReference>
<dbReference type="EMBL" id="CH471076">
    <property type="protein sequence ID" value="EAW74942.1"/>
    <property type="molecule type" value="Genomic_DNA"/>
</dbReference>
<dbReference type="EMBL" id="BC108908">
    <property type="protein sequence ID" value="AAI08909.1"/>
    <property type="molecule type" value="mRNA"/>
</dbReference>
<dbReference type="EMBL" id="BC108909">
    <property type="protein sequence ID" value="AAI08910.1"/>
    <property type="molecule type" value="mRNA"/>
</dbReference>
<dbReference type="CCDS" id="CCDS8233.1">
    <molecule id="Q15054-1"/>
</dbReference>
<dbReference type="CCDS" id="CCDS86228.1">
    <molecule id="Q15054-2"/>
</dbReference>
<dbReference type="RefSeq" id="NP_001350526.1">
    <molecule id="Q15054-2"/>
    <property type="nucleotide sequence ID" value="NM_001363597.2"/>
</dbReference>
<dbReference type="RefSeq" id="NP_006582.1">
    <molecule id="Q15054-1"/>
    <property type="nucleotide sequence ID" value="NM_006591.3"/>
</dbReference>
<dbReference type="PDB" id="1U76">
    <property type="method" value="X-ray"/>
    <property type="resolution" value="2.60 A"/>
    <property type="chains" value="B/D/F=452-466"/>
</dbReference>
<dbReference type="PDB" id="2N1G">
    <property type="method" value="NMR"/>
    <property type="chains" value="B=231-246"/>
</dbReference>
<dbReference type="PDB" id="3E0J">
    <property type="method" value="X-ray"/>
    <property type="resolution" value="3.00 A"/>
    <property type="chains" value="B/D/F/H=1-144"/>
</dbReference>
<dbReference type="PDB" id="6S1M">
    <property type="method" value="EM"/>
    <property type="resolution" value="4.27 A"/>
    <property type="chains" value="C=2-466"/>
</dbReference>
<dbReference type="PDB" id="6S1N">
    <property type="method" value="EM"/>
    <property type="resolution" value="4.86 A"/>
    <property type="chains" value="C=2-466"/>
</dbReference>
<dbReference type="PDB" id="6S1O">
    <property type="method" value="EM"/>
    <property type="resolution" value="8.10 A"/>
    <property type="chains" value="C=2-466"/>
</dbReference>
<dbReference type="PDB" id="6TNY">
    <property type="method" value="EM"/>
    <property type="resolution" value="3.08 A"/>
    <property type="chains" value="C=2-466"/>
</dbReference>
<dbReference type="PDB" id="6TNZ">
    <property type="method" value="EM"/>
    <property type="resolution" value="4.05 A"/>
    <property type="chains" value="C=2-466"/>
</dbReference>
<dbReference type="PDB" id="9EKB">
    <property type="method" value="EM"/>
    <property type="resolution" value="3.65 A"/>
    <property type="chains" value="C=1-466"/>
</dbReference>
<dbReference type="PDBsum" id="1U76"/>
<dbReference type="PDBsum" id="2N1G"/>
<dbReference type="PDBsum" id="3E0J"/>
<dbReference type="PDBsum" id="6S1M"/>
<dbReference type="PDBsum" id="6S1N"/>
<dbReference type="PDBsum" id="6S1O"/>
<dbReference type="PDBsum" id="6TNY"/>
<dbReference type="PDBsum" id="6TNZ"/>
<dbReference type="PDBsum" id="9EKB"/>
<dbReference type="EMDB" id="EMD-10080"/>
<dbReference type="EMDB" id="EMD-10081"/>
<dbReference type="EMDB" id="EMD-10082"/>
<dbReference type="EMDB" id="EMD-10539"/>
<dbReference type="EMDB" id="EMD-10540"/>
<dbReference type="EMDB" id="EMD-48117"/>
<dbReference type="SMR" id="Q15054"/>
<dbReference type="BioGRID" id="115940">
    <property type="interactions" value="122"/>
</dbReference>
<dbReference type="ComplexPortal" id="CPX-2097">
    <property type="entry name" value="DNA polymerase delta complex"/>
</dbReference>
<dbReference type="ComplexPortal" id="CPX-994">
    <property type="entry name" value="DNA polymerase zeta complex"/>
</dbReference>
<dbReference type="CORUM" id="Q15054"/>
<dbReference type="DIP" id="DIP-35772N"/>
<dbReference type="ELM" id="Q15054"/>
<dbReference type="FunCoup" id="Q15054">
    <property type="interactions" value="1185"/>
</dbReference>
<dbReference type="IntAct" id="Q15054">
    <property type="interactions" value="376"/>
</dbReference>
<dbReference type="MINT" id="Q15054"/>
<dbReference type="STRING" id="9606.ENSP00000263681"/>
<dbReference type="ChEMBL" id="CHEMBL2363042"/>
<dbReference type="GlyGen" id="Q15054">
    <property type="glycosylation" value="2 sites, 1 O-linked glycan (2 sites)"/>
</dbReference>
<dbReference type="iPTMnet" id="Q15054"/>
<dbReference type="PhosphoSitePlus" id="Q15054"/>
<dbReference type="BioMuta" id="POLD3"/>
<dbReference type="DMDM" id="17375506"/>
<dbReference type="jPOST" id="Q15054"/>
<dbReference type="MassIVE" id="Q15054"/>
<dbReference type="PaxDb" id="9606-ENSP00000263681"/>
<dbReference type="PeptideAtlas" id="Q15054"/>
<dbReference type="ProteomicsDB" id="60409">
    <molecule id="Q15054-1"/>
</dbReference>
<dbReference type="ProteomicsDB" id="61612"/>
<dbReference type="ProteomicsDB" id="61613"/>
<dbReference type="Pumba" id="Q15054"/>
<dbReference type="Antibodypedia" id="31076">
    <property type="antibodies" value="220 antibodies from 31 providers"/>
</dbReference>
<dbReference type="DNASU" id="10714"/>
<dbReference type="Ensembl" id="ENST00000263681.7">
    <molecule id="Q15054-1"/>
    <property type="protein sequence ID" value="ENSP00000263681.2"/>
    <property type="gene ID" value="ENSG00000077514.9"/>
</dbReference>
<dbReference type="Ensembl" id="ENST00000527458.5">
    <molecule id="Q15054-2"/>
    <property type="protein sequence ID" value="ENSP00000432951.1"/>
    <property type="gene ID" value="ENSG00000077514.9"/>
</dbReference>
<dbReference type="Ensembl" id="ENST00000532497.5">
    <molecule id="Q15054-3"/>
    <property type="protein sequence ID" value="ENSP00000436018.1"/>
    <property type="gene ID" value="ENSG00000077514.9"/>
</dbReference>
<dbReference type="GeneID" id="10714"/>
<dbReference type="KEGG" id="hsa:10714"/>
<dbReference type="MANE-Select" id="ENST00000263681.7">
    <property type="protein sequence ID" value="ENSP00000263681.2"/>
    <property type="RefSeq nucleotide sequence ID" value="NM_006591.3"/>
    <property type="RefSeq protein sequence ID" value="NP_006582.1"/>
</dbReference>
<dbReference type="UCSC" id="uc001ovf.3">
    <molecule id="Q15054-1"/>
    <property type="organism name" value="human"/>
</dbReference>
<dbReference type="AGR" id="HGNC:20932"/>
<dbReference type="CTD" id="10714"/>
<dbReference type="DisGeNET" id="10714"/>
<dbReference type="GeneCards" id="POLD3"/>
<dbReference type="HGNC" id="HGNC:20932">
    <property type="gene designation" value="POLD3"/>
</dbReference>
<dbReference type="HPA" id="ENSG00000077514">
    <property type="expression patterns" value="Low tissue specificity"/>
</dbReference>
<dbReference type="MalaCards" id="POLD3"/>
<dbReference type="MIM" id="611415">
    <property type="type" value="gene"/>
</dbReference>
<dbReference type="MIM" id="620869">
    <property type="type" value="phenotype"/>
</dbReference>
<dbReference type="neXtProt" id="NX_Q15054"/>
<dbReference type="OpenTargets" id="ENSG00000077514"/>
<dbReference type="PharmGKB" id="PA134868595"/>
<dbReference type="VEuPathDB" id="HostDB:ENSG00000077514"/>
<dbReference type="eggNOG" id="ENOG502QPSW">
    <property type="taxonomic scope" value="Eukaryota"/>
</dbReference>
<dbReference type="GeneTree" id="ENSGT01060000248648"/>
<dbReference type="HOGENOM" id="CLU_047571_0_0_1"/>
<dbReference type="InParanoid" id="Q15054"/>
<dbReference type="OMA" id="QMLYDFH"/>
<dbReference type="OrthoDB" id="514823at2759"/>
<dbReference type="PAN-GO" id="Q15054">
    <property type="GO annotations" value="5 GO annotations based on evolutionary models"/>
</dbReference>
<dbReference type="PhylomeDB" id="Q15054"/>
<dbReference type="TreeFam" id="TF103006"/>
<dbReference type="PathwayCommons" id="Q15054"/>
<dbReference type="Reactome" id="R-HSA-110314">
    <property type="pathway name" value="Recognition of DNA damage by PCNA-containing replication complex"/>
</dbReference>
<dbReference type="Reactome" id="R-HSA-174411">
    <property type="pathway name" value="Polymerase switching on the C-strand of the telomere"/>
</dbReference>
<dbReference type="Reactome" id="R-HSA-174414">
    <property type="pathway name" value="Processive synthesis on the C-strand of the telomere"/>
</dbReference>
<dbReference type="Reactome" id="R-HSA-174417">
    <property type="pathway name" value="Telomere C-strand (Lagging Strand) Synthesis"/>
</dbReference>
<dbReference type="Reactome" id="R-HSA-174437">
    <property type="pathway name" value="Removal of the Flap Intermediate from the C-strand"/>
</dbReference>
<dbReference type="Reactome" id="R-HSA-5358565">
    <property type="pathway name" value="Mismatch repair (MMR) directed by MSH2:MSH6 (MutSalpha)"/>
</dbReference>
<dbReference type="Reactome" id="R-HSA-5358606">
    <property type="pathway name" value="Mismatch repair (MMR) directed by MSH2:MSH3 (MutSbeta)"/>
</dbReference>
<dbReference type="Reactome" id="R-HSA-5651801">
    <property type="pathway name" value="PCNA-Dependent Long Patch Base Excision Repair"/>
</dbReference>
<dbReference type="Reactome" id="R-HSA-5656169">
    <property type="pathway name" value="Termination of translesion DNA synthesis"/>
</dbReference>
<dbReference type="Reactome" id="R-HSA-5685942">
    <property type="pathway name" value="HDR through Homologous Recombination (HRR)"/>
</dbReference>
<dbReference type="Reactome" id="R-HSA-5696397">
    <property type="pathway name" value="Gap-filling DNA repair synthesis and ligation in GG-NER"/>
</dbReference>
<dbReference type="Reactome" id="R-HSA-5696400">
    <property type="pathway name" value="Dual Incision in GG-NER"/>
</dbReference>
<dbReference type="Reactome" id="R-HSA-6782135">
    <property type="pathway name" value="Dual incision in TC-NER"/>
</dbReference>
<dbReference type="Reactome" id="R-HSA-6782210">
    <property type="pathway name" value="Gap-filling DNA repair synthesis and ligation in TC-NER"/>
</dbReference>
<dbReference type="Reactome" id="R-HSA-69091">
    <property type="pathway name" value="Polymerase switching"/>
</dbReference>
<dbReference type="Reactome" id="R-HSA-69166">
    <property type="pathway name" value="Removal of the Flap Intermediate"/>
</dbReference>
<dbReference type="Reactome" id="R-HSA-69183">
    <property type="pathway name" value="Processive synthesis on the lagging strand"/>
</dbReference>
<dbReference type="SignaLink" id="Q15054"/>
<dbReference type="SIGNOR" id="Q15054"/>
<dbReference type="BioGRID-ORCS" id="10714">
    <property type="hits" value="774 hits in 1137 CRISPR screens"/>
</dbReference>
<dbReference type="ChiTaRS" id="POLD3">
    <property type="organism name" value="human"/>
</dbReference>
<dbReference type="EvolutionaryTrace" id="Q15054"/>
<dbReference type="GeneWiki" id="POLD3"/>
<dbReference type="GenomeRNAi" id="10714"/>
<dbReference type="Pharos" id="Q15054">
    <property type="development level" value="Tbio"/>
</dbReference>
<dbReference type="PRO" id="PR:Q15054"/>
<dbReference type="Proteomes" id="UP000005640">
    <property type="component" value="Chromosome 11"/>
</dbReference>
<dbReference type="RNAct" id="Q15054">
    <property type="molecule type" value="protein"/>
</dbReference>
<dbReference type="Bgee" id="ENSG00000077514">
    <property type="expression patterns" value="Expressed in secondary oocyte and 194 other cell types or tissues"/>
</dbReference>
<dbReference type="ExpressionAtlas" id="Q15054">
    <property type="expression patterns" value="baseline and differential"/>
</dbReference>
<dbReference type="GO" id="GO:0005737">
    <property type="term" value="C:cytoplasm"/>
    <property type="evidence" value="ECO:0007669"/>
    <property type="project" value="UniProtKB-SubCell"/>
</dbReference>
<dbReference type="GO" id="GO:0043625">
    <property type="term" value="C:delta DNA polymerase complex"/>
    <property type="evidence" value="ECO:0000314"/>
    <property type="project" value="UniProtKB"/>
</dbReference>
<dbReference type="GO" id="GO:0005654">
    <property type="term" value="C:nucleoplasm"/>
    <property type="evidence" value="ECO:0000314"/>
    <property type="project" value="HPA"/>
</dbReference>
<dbReference type="GO" id="GO:0016035">
    <property type="term" value="C:zeta DNA polymerase complex"/>
    <property type="evidence" value="ECO:0000314"/>
    <property type="project" value="FlyBase"/>
</dbReference>
<dbReference type="GO" id="GO:0030674">
    <property type="term" value="F:protein-macromolecule adaptor activity"/>
    <property type="evidence" value="ECO:0000353"/>
    <property type="project" value="UniProtKB"/>
</dbReference>
<dbReference type="GO" id="GO:0071897">
    <property type="term" value="P:DNA biosynthetic process"/>
    <property type="evidence" value="ECO:0000314"/>
    <property type="project" value="UniProtKB"/>
</dbReference>
<dbReference type="GO" id="GO:0006271">
    <property type="term" value="P:DNA strand elongation involved in DNA replication"/>
    <property type="evidence" value="ECO:0000318"/>
    <property type="project" value="GO_Central"/>
</dbReference>
<dbReference type="GO" id="GO:0000731">
    <property type="term" value="P:DNA synthesis involved in DNA repair"/>
    <property type="evidence" value="ECO:0000303"/>
    <property type="project" value="UniProtKB"/>
</dbReference>
<dbReference type="GO" id="GO:1904161">
    <property type="term" value="P:DNA synthesis involved in UV-damage excision repair"/>
    <property type="evidence" value="ECO:0000318"/>
    <property type="project" value="GO_Central"/>
</dbReference>
<dbReference type="GO" id="GO:0006261">
    <property type="term" value="P:DNA-templated DNA replication"/>
    <property type="evidence" value="ECO:0000314"/>
    <property type="project" value="ComplexPortal"/>
</dbReference>
<dbReference type="GO" id="GO:0042276">
    <property type="term" value="P:error-prone translesion synthesis"/>
    <property type="evidence" value="ECO:0000314"/>
    <property type="project" value="ComplexPortal"/>
</dbReference>
<dbReference type="GO" id="GO:0006298">
    <property type="term" value="P:mismatch repair"/>
    <property type="evidence" value="ECO:0000303"/>
    <property type="project" value="UniProtKB"/>
</dbReference>
<dbReference type="GO" id="GO:0006297">
    <property type="term" value="P:nucleotide-excision repair, DNA gap filling"/>
    <property type="evidence" value="ECO:0000315"/>
    <property type="project" value="UniProtKB"/>
</dbReference>
<dbReference type="FunFam" id="3.90.1030.20:FF:000001">
    <property type="entry name" value="DNA polymerase delta 3, accessory subunit"/>
    <property type="match status" value="1"/>
</dbReference>
<dbReference type="Gene3D" id="3.90.1030.20">
    <property type="entry name" value="DNA polymerase delta, p66 (Cdc27) subunit, wHTH domain"/>
    <property type="match status" value="1"/>
</dbReference>
<dbReference type="IDEAL" id="IID00080"/>
<dbReference type="InterPro" id="IPR019038">
    <property type="entry name" value="POLD3"/>
</dbReference>
<dbReference type="InterPro" id="IPR041913">
    <property type="entry name" value="POLD3_sf"/>
</dbReference>
<dbReference type="PANTHER" id="PTHR17598">
    <property type="entry name" value="DNA POLYMERASE DELTA SUBUNIT 3"/>
    <property type="match status" value="1"/>
</dbReference>
<dbReference type="PANTHER" id="PTHR17598:SF13">
    <property type="entry name" value="DNA POLYMERASE DELTA SUBUNIT 3"/>
    <property type="match status" value="1"/>
</dbReference>
<dbReference type="Pfam" id="PF09507">
    <property type="entry name" value="CDC27"/>
    <property type="match status" value="1"/>
</dbReference>
<evidence type="ECO:0000250" key="1">
    <source>
        <dbReference type="UniProtKB" id="Q9EQ28"/>
    </source>
</evidence>
<evidence type="ECO:0000256" key="2">
    <source>
        <dbReference type="SAM" id="MobiDB-lite"/>
    </source>
</evidence>
<evidence type="ECO:0000269" key="3">
    <source>
    </source>
</evidence>
<evidence type="ECO:0000269" key="4">
    <source>
    </source>
</evidence>
<evidence type="ECO:0000269" key="5">
    <source>
    </source>
</evidence>
<evidence type="ECO:0000269" key="6">
    <source>
    </source>
</evidence>
<evidence type="ECO:0000269" key="7">
    <source>
    </source>
</evidence>
<evidence type="ECO:0000269" key="8">
    <source>
    </source>
</evidence>
<evidence type="ECO:0000269" key="9">
    <source>
    </source>
</evidence>
<evidence type="ECO:0000269" key="10">
    <source>
    </source>
</evidence>
<evidence type="ECO:0000269" key="11">
    <source>
    </source>
</evidence>
<evidence type="ECO:0000269" key="12">
    <source>
    </source>
</evidence>
<evidence type="ECO:0000269" key="13">
    <source>
    </source>
</evidence>
<evidence type="ECO:0000269" key="14">
    <source>
    </source>
</evidence>
<evidence type="ECO:0000269" key="15">
    <source>
    </source>
</evidence>
<evidence type="ECO:0000269" key="16">
    <source>
    </source>
</evidence>
<evidence type="ECO:0000269" key="17">
    <source>
    </source>
</evidence>
<evidence type="ECO:0000269" key="18">
    <source>
    </source>
</evidence>
<evidence type="ECO:0000269" key="19">
    <source>
    </source>
</evidence>
<evidence type="ECO:0000269" key="20">
    <source>
    </source>
</evidence>
<evidence type="ECO:0000269" key="21">
    <source>
    </source>
</evidence>
<evidence type="ECO:0000269" key="22">
    <source>
    </source>
</evidence>
<evidence type="ECO:0000269" key="23">
    <source>
    </source>
</evidence>
<evidence type="ECO:0000269" key="24">
    <source>
    </source>
</evidence>
<evidence type="ECO:0000269" key="25">
    <source>
    </source>
</evidence>
<evidence type="ECO:0000269" key="26">
    <source>
    </source>
</evidence>
<evidence type="ECO:0000269" key="27">
    <source ref="6"/>
</evidence>
<evidence type="ECO:0000303" key="28">
    <source>
    </source>
</evidence>
<evidence type="ECO:0000303" key="29">
    <source>
    </source>
</evidence>
<evidence type="ECO:0000303" key="30">
    <source>
    </source>
</evidence>
<evidence type="ECO:0000303" key="31">
    <source>
    </source>
</evidence>
<evidence type="ECO:0000305" key="32"/>
<evidence type="ECO:0007744" key="33">
    <source>
    </source>
</evidence>
<evidence type="ECO:0007744" key="34">
    <source>
    </source>
</evidence>
<evidence type="ECO:0007744" key="35">
    <source>
    </source>
</evidence>
<evidence type="ECO:0007744" key="36">
    <source>
    </source>
</evidence>
<evidence type="ECO:0007744" key="37">
    <source>
    </source>
</evidence>
<evidence type="ECO:0007744" key="38">
    <source>
    </source>
</evidence>
<evidence type="ECO:0007744" key="39">
    <source>
    </source>
</evidence>
<evidence type="ECO:0007744" key="40">
    <source>
    </source>
</evidence>
<evidence type="ECO:0007744" key="41">
    <source>
    </source>
</evidence>
<evidence type="ECO:0007744" key="42">
    <source>
    </source>
</evidence>
<evidence type="ECO:0007829" key="43">
    <source>
        <dbReference type="PDB" id="1U76"/>
    </source>
</evidence>
<evidence type="ECO:0007829" key="44">
    <source>
        <dbReference type="PDB" id="2N1G"/>
    </source>
</evidence>
<evidence type="ECO:0007829" key="45">
    <source>
        <dbReference type="PDB" id="3E0J"/>
    </source>
</evidence>
<organism>
    <name type="scientific">Homo sapiens</name>
    <name type="common">Human</name>
    <dbReference type="NCBI Taxonomy" id="9606"/>
    <lineage>
        <taxon>Eukaryota</taxon>
        <taxon>Metazoa</taxon>
        <taxon>Chordata</taxon>
        <taxon>Craniata</taxon>
        <taxon>Vertebrata</taxon>
        <taxon>Euteleostomi</taxon>
        <taxon>Mammalia</taxon>
        <taxon>Eutheria</taxon>
        <taxon>Euarchontoglires</taxon>
        <taxon>Primates</taxon>
        <taxon>Haplorrhini</taxon>
        <taxon>Catarrhini</taxon>
        <taxon>Hominidae</taxon>
        <taxon>Homo</taxon>
    </lineage>
</organism>
<accession>Q15054</accession>
<accession>B7ZAI6</accession>
<accession>Q32MZ9</accession>
<accession>Q32N00</accession>
<reference key="1">
    <citation type="journal article" date="1994" name="DNA Res.">
        <title>Prediction of the coding sequences of unidentified human genes. I. The coding sequences of 40 new genes (KIAA0001-KIAA0040) deduced by analysis of randomly sampled cDNA clones from human immature myeloid cell line KG-1.</title>
        <authorList>
            <person name="Nomura N."/>
            <person name="Miyajima N."/>
            <person name="Sazuka T."/>
            <person name="Tanaka A."/>
            <person name="Kawarabayasi Y."/>
            <person name="Sato S."/>
            <person name="Nagase T."/>
            <person name="Seki N."/>
            <person name="Ishikawa K."/>
            <person name="Tabata S."/>
        </authorList>
    </citation>
    <scope>NUCLEOTIDE SEQUENCE [LARGE SCALE MRNA] (ISOFORM 1)</scope>
    <source>
        <tissue>Bone marrow</tissue>
    </source>
</reference>
<reference key="2">
    <citation type="journal article" date="2004" name="Nat. Genet.">
        <title>Complete sequencing and characterization of 21,243 full-length human cDNAs.</title>
        <authorList>
            <person name="Ota T."/>
            <person name="Suzuki Y."/>
            <person name="Nishikawa T."/>
            <person name="Otsuki T."/>
            <person name="Sugiyama T."/>
            <person name="Irie R."/>
            <person name="Wakamatsu A."/>
            <person name="Hayashi K."/>
            <person name="Sato H."/>
            <person name="Nagai K."/>
            <person name="Kimura K."/>
            <person name="Makita H."/>
            <person name="Sekine M."/>
            <person name="Obayashi M."/>
            <person name="Nishi T."/>
            <person name="Shibahara T."/>
            <person name="Tanaka T."/>
            <person name="Ishii S."/>
            <person name="Yamamoto J."/>
            <person name="Saito K."/>
            <person name="Kawai Y."/>
            <person name="Isono Y."/>
            <person name="Nakamura Y."/>
            <person name="Nagahari K."/>
            <person name="Murakami K."/>
            <person name="Yasuda T."/>
            <person name="Iwayanagi T."/>
            <person name="Wagatsuma M."/>
            <person name="Shiratori A."/>
            <person name="Sudo H."/>
            <person name="Hosoiri T."/>
            <person name="Kaku Y."/>
            <person name="Kodaira H."/>
            <person name="Kondo H."/>
            <person name="Sugawara M."/>
            <person name="Takahashi M."/>
            <person name="Kanda K."/>
            <person name="Yokoi T."/>
            <person name="Furuya T."/>
            <person name="Kikkawa E."/>
            <person name="Omura Y."/>
            <person name="Abe K."/>
            <person name="Kamihara K."/>
            <person name="Katsuta N."/>
            <person name="Sato K."/>
            <person name="Tanikawa M."/>
            <person name="Yamazaki M."/>
            <person name="Ninomiya K."/>
            <person name="Ishibashi T."/>
            <person name="Yamashita H."/>
            <person name="Murakawa K."/>
            <person name="Fujimori K."/>
            <person name="Tanai H."/>
            <person name="Kimata M."/>
            <person name="Watanabe M."/>
            <person name="Hiraoka S."/>
            <person name="Chiba Y."/>
            <person name="Ishida S."/>
            <person name="Ono Y."/>
            <person name="Takiguchi S."/>
            <person name="Watanabe S."/>
            <person name="Yosida M."/>
            <person name="Hotuta T."/>
            <person name="Kusano J."/>
            <person name="Kanehori K."/>
            <person name="Takahashi-Fujii A."/>
            <person name="Hara H."/>
            <person name="Tanase T.-O."/>
            <person name="Nomura Y."/>
            <person name="Togiya S."/>
            <person name="Komai F."/>
            <person name="Hara R."/>
            <person name="Takeuchi K."/>
            <person name="Arita M."/>
            <person name="Imose N."/>
            <person name="Musashino K."/>
            <person name="Yuuki H."/>
            <person name="Oshima A."/>
            <person name="Sasaki N."/>
            <person name="Aotsuka S."/>
            <person name="Yoshikawa Y."/>
            <person name="Matsunawa H."/>
            <person name="Ichihara T."/>
            <person name="Shiohata N."/>
            <person name="Sano S."/>
            <person name="Moriya S."/>
            <person name="Momiyama H."/>
            <person name="Satoh N."/>
            <person name="Takami S."/>
            <person name="Terashima Y."/>
            <person name="Suzuki O."/>
            <person name="Nakagawa S."/>
            <person name="Senoh A."/>
            <person name="Mizoguchi H."/>
            <person name="Goto Y."/>
            <person name="Shimizu F."/>
            <person name="Wakebe H."/>
            <person name="Hishigaki H."/>
            <person name="Watanabe T."/>
            <person name="Sugiyama A."/>
            <person name="Takemoto M."/>
            <person name="Kawakami B."/>
            <person name="Yamazaki M."/>
            <person name="Watanabe K."/>
            <person name="Kumagai A."/>
            <person name="Itakura S."/>
            <person name="Fukuzumi Y."/>
            <person name="Fujimori Y."/>
            <person name="Komiyama M."/>
            <person name="Tashiro H."/>
            <person name="Tanigami A."/>
            <person name="Fujiwara T."/>
            <person name="Ono T."/>
            <person name="Yamada K."/>
            <person name="Fujii Y."/>
            <person name="Ozaki K."/>
            <person name="Hirao M."/>
            <person name="Ohmori Y."/>
            <person name="Kawabata A."/>
            <person name="Hikiji T."/>
            <person name="Kobatake N."/>
            <person name="Inagaki H."/>
            <person name="Ikema Y."/>
            <person name="Okamoto S."/>
            <person name="Okitani R."/>
            <person name="Kawakami T."/>
            <person name="Noguchi S."/>
            <person name="Itoh T."/>
            <person name="Shigeta K."/>
            <person name="Senba T."/>
            <person name="Matsumura K."/>
            <person name="Nakajima Y."/>
            <person name="Mizuno T."/>
            <person name="Morinaga M."/>
            <person name="Sasaki M."/>
            <person name="Togashi T."/>
            <person name="Oyama M."/>
            <person name="Hata H."/>
            <person name="Watanabe M."/>
            <person name="Komatsu T."/>
            <person name="Mizushima-Sugano J."/>
            <person name="Satoh T."/>
            <person name="Shirai Y."/>
            <person name="Takahashi Y."/>
            <person name="Nakagawa K."/>
            <person name="Okumura K."/>
            <person name="Nagase T."/>
            <person name="Nomura N."/>
            <person name="Kikuchi H."/>
            <person name="Masuho Y."/>
            <person name="Yamashita R."/>
            <person name="Nakai K."/>
            <person name="Yada T."/>
            <person name="Nakamura Y."/>
            <person name="Ohara O."/>
            <person name="Isogai T."/>
            <person name="Sugano S."/>
        </authorList>
    </citation>
    <scope>NUCLEOTIDE SEQUENCE [LARGE SCALE MRNA] (ISOFORM 1)</scope>
    <source>
        <tissue>Placenta</tissue>
    </source>
</reference>
<reference key="3">
    <citation type="journal article" date="2006" name="Nature">
        <title>Human chromosome 11 DNA sequence and analysis including novel gene identification.</title>
        <authorList>
            <person name="Taylor T.D."/>
            <person name="Noguchi H."/>
            <person name="Totoki Y."/>
            <person name="Toyoda A."/>
            <person name="Kuroki Y."/>
            <person name="Dewar K."/>
            <person name="Lloyd C."/>
            <person name="Itoh T."/>
            <person name="Takeda T."/>
            <person name="Kim D.-W."/>
            <person name="She X."/>
            <person name="Barlow K.F."/>
            <person name="Bloom T."/>
            <person name="Bruford E."/>
            <person name="Chang J.L."/>
            <person name="Cuomo C.A."/>
            <person name="Eichler E."/>
            <person name="FitzGerald M.G."/>
            <person name="Jaffe D.B."/>
            <person name="LaButti K."/>
            <person name="Nicol R."/>
            <person name="Park H.-S."/>
            <person name="Seaman C."/>
            <person name="Sougnez C."/>
            <person name="Yang X."/>
            <person name="Zimmer A.R."/>
            <person name="Zody M.C."/>
            <person name="Birren B.W."/>
            <person name="Nusbaum C."/>
            <person name="Fujiyama A."/>
            <person name="Hattori M."/>
            <person name="Rogers J."/>
            <person name="Lander E.S."/>
            <person name="Sakaki Y."/>
        </authorList>
    </citation>
    <scope>NUCLEOTIDE SEQUENCE [LARGE SCALE GENOMIC DNA]</scope>
</reference>
<reference key="4">
    <citation type="submission" date="2005-07" db="EMBL/GenBank/DDBJ databases">
        <authorList>
            <person name="Mural R.J."/>
            <person name="Istrail S."/>
            <person name="Sutton G.G."/>
            <person name="Florea L."/>
            <person name="Halpern A.L."/>
            <person name="Mobarry C.M."/>
            <person name="Lippert R."/>
            <person name="Walenz B."/>
            <person name="Shatkay H."/>
            <person name="Dew I."/>
            <person name="Miller J.R."/>
            <person name="Flanigan M.J."/>
            <person name="Edwards N.J."/>
            <person name="Bolanos R."/>
            <person name="Fasulo D."/>
            <person name="Halldorsson B.V."/>
            <person name="Hannenhalli S."/>
            <person name="Turner R."/>
            <person name="Yooseph S."/>
            <person name="Lu F."/>
            <person name="Nusskern D.R."/>
            <person name="Shue B.C."/>
            <person name="Zheng X.H."/>
            <person name="Zhong F."/>
            <person name="Delcher A.L."/>
            <person name="Huson D.H."/>
            <person name="Kravitz S.A."/>
            <person name="Mouchard L."/>
            <person name="Reinert K."/>
            <person name="Remington K.A."/>
            <person name="Clark A.G."/>
            <person name="Waterman M.S."/>
            <person name="Eichler E.E."/>
            <person name="Adams M.D."/>
            <person name="Hunkapiller M.W."/>
            <person name="Myers E.W."/>
            <person name="Venter J.C."/>
        </authorList>
    </citation>
    <scope>NUCLEOTIDE SEQUENCE [LARGE SCALE GENOMIC DNA]</scope>
</reference>
<reference key="5">
    <citation type="journal article" date="2004" name="Genome Res.">
        <title>The status, quality, and expansion of the NIH full-length cDNA project: the Mammalian Gene Collection (MGC).</title>
        <authorList>
            <consortium name="The MGC Project Team"/>
        </authorList>
    </citation>
    <scope>NUCLEOTIDE SEQUENCE [LARGE SCALE MRNA] (ISOFORMS 2 AND 3)</scope>
</reference>
<reference key="6">
    <citation type="submission" date="2009-03" db="UniProtKB">
        <authorList>
            <person name="Bienvenut W.V."/>
            <person name="Waridel P."/>
            <person name="Quadroni M."/>
        </authorList>
    </citation>
    <scope>PROTEIN SEQUENCE OF 2-19 AND 110-123</scope>
    <scope>CLEAVAGE OF INITIATOR METHIONINE</scope>
    <scope>ACETYLATION AT ALA-2</scope>
    <scope>IDENTIFICATION BY MASS SPECTROMETRY</scope>
    <source>
        <tissue>Embryonic kidney</tissue>
    </source>
</reference>
<reference key="7">
    <citation type="journal article" date="1999" name="Nucleic Acids Res.">
        <title>Isolation and identification of the third subunit of mammalian DNA polymerase delta by PCNA-affinity chromatography of mouse FM3A cell extracts.</title>
        <authorList>
            <person name="Hughes P."/>
            <person name="Tratner I."/>
            <person name="Ducoux M."/>
            <person name="Piard K."/>
            <person name="Baldacci G."/>
        </authorList>
    </citation>
    <scope>FUNCTION</scope>
</reference>
<reference key="8">
    <citation type="journal article" date="2000" name="Biochemistry">
        <title>Evidence that DNA polymerase delta isolated by immunoaffinity chromatography exhibits high-molecular weight characteristics and is associated with the KIAA0039 protein and RPA.</title>
        <authorList>
            <person name="Mo J.-Y."/>
            <person name="Liu L."/>
            <person name="Leon A."/>
            <person name="Mazloum N."/>
            <person name="Lee M.Y.W.T."/>
        </authorList>
    </citation>
    <scope>FUNCTION</scope>
</reference>
<reference key="9">
    <citation type="journal article" date="2001" name="J. Biochem.">
        <title>The human homologue of fission Yeast cdc27, p66, is a component of active human DNA polymerase delta.</title>
        <authorList>
            <person name="Shikata K."/>
            <person name="Ohta S."/>
            <person name="Yamada K."/>
            <person name="Obuse C."/>
            <person name="Yoshikawa H."/>
            <person name="Tsurimoto T."/>
        </authorList>
    </citation>
    <scope>IDENTIFICATION IN POL-DELTA COMPLEX</scope>
    <scope>INTERACTION WITH POLD2 AND PCNA</scope>
</reference>
<reference key="10">
    <citation type="journal article" date="2001" name="J. Biol. Chem.">
        <title>Mediation of proliferating cell nuclear antigen (PCNA)-dependent DNA replication through a conserved p21(Cip1)-like PCNA-binding motif present in the third subunit of human DNA polymerase delta.</title>
        <authorList>
            <person name="Ducoux M."/>
            <person name="Urbach S."/>
            <person name="Baldacci G."/>
            <person name="Huebscher U."/>
            <person name="Koundrioukoff S."/>
            <person name="Christensen J."/>
            <person name="Hughes P."/>
        </authorList>
    </citation>
    <scope>FUNCTION</scope>
    <scope>INTERACTION WITH PCNA AND POLD1</scope>
    <scope>SUBCELLULAR LOCATION</scope>
    <scope>DOMAIN</scope>
    <scope>PHOSPHORYLATION</scope>
</reference>
<reference key="11">
    <citation type="journal article" date="2002" name="Biochemistry">
        <title>Reconstitution and characterization of the human DNA polymerase delta four-subunit holoenzyme.</title>
        <authorList>
            <person name="Xie B."/>
            <person name="Mazloum N."/>
            <person name="Liu L."/>
            <person name="Rahmeh A."/>
            <person name="Li H."/>
            <person name="Lee M.Y."/>
        </authorList>
    </citation>
    <scope>INTERACTION WITH PCNA</scope>
    <scope>CHARACTERIZATION OF POL-DELTA2 AND POL-DELTA4 COMPLEXES</scope>
</reference>
<reference key="12">
    <citation type="journal article" date="2003" name="J. Biol. Chem.">
        <title>Identification of a novel protein, PDIP38, that interacts with the p50 subunit of DNA polymerase delta and proliferating cell nuclear antigen.</title>
        <authorList>
            <person name="Liu L."/>
            <person name="Rodriguez-Belmonte E.M."/>
            <person name="Mazloum N."/>
            <person name="Xie B."/>
            <person name="Lee M.Y.W.T."/>
        </authorList>
    </citation>
    <scope>INTERACTION WITH POLDIP2</scope>
</reference>
<reference key="13">
    <citation type="journal article" date="2006" name="Biochem. Biophys. Res. Commun.">
        <title>The p66 and p12 subunits of DNA polymerase delta are modified by ubiquitin and ubiquitin-like proteins.</title>
        <authorList>
            <person name="Liu G."/>
            <person name="Warbrick E."/>
        </authorList>
    </citation>
    <scope>UBIQUITINATION</scope>
    <scope>SUMOYLATION AT LYS-258 AND LYS-433</scope>
    <scope>MUTAGENESIS OF LYS-258; LYS-325 AND LYS-433</scope>
</reference>
<reference key="14">
    <citation type="journal article" date="2006" name="Cell">
        <title>Global, in vivo, and site-specific phosphorylation dynamics in signaling networks.</title>
        <authorList>
            <person name="Olsen J.V."/>
            <person name="Blagoev B."/>
            <person name="Gnad F."/>
            <person name="Macek B."/>
            <person name="Kumar C."/>
            <person name="Mortensen P."/>
            <person name="Mann M."/>
        </authorList>
    </citation>
    <scope>PHOSPHORYLATION [LARGE SCALE ANALYSIS] AT SER-307</scope>
    <scope>IDENTIFICATION BY MASS SPECTROMETRY [LARGE SCALE ANALYSIS]</scope>
    <source>
        <tissue>Cervix carcinoma</tissue>
    </source>
</reference>
<reference key="15">
    <citation type="journal article" date="2006" name="J. Biol. Chem.">
        <title>Functional roles of p12, the fourth subunit of human DNA polymerase delta.</title>
        <authorList>
            <person name="Li H."/>
            <person name="Xie B."/>
            <person name="Zhou Y."/>
            <person name="Rahmeh A."/>
            <person name="Trusa S."/>
            <person name="Zhang S."/>
            <person name="Gao Y."/>
            <person name="Lee E.Y."/>
            <person name="Lee M.Y."/>
        </authorList>
    </citation>
    <scope>FUNCTION</scope>
    <scope>INTERACTION WITH POLD2 AND PCNA</scope>
</reference>
<reference key="16">
    <citation type="journal article" date="2007" name="J. Biol. Chem.">
        <title>A novel DNA damage response: rapid degradation of the p12 subunit of dna polymerase delta.</title>
        <authorList>
            <person name="Zhang S."/>
            <person name="Zhou Y."/>
            <person name="Trusa S."/>
            <person name="Meng X."/>
            <person name="Lee E.Y."/>
            <person name="Lee M.Y."/>
        </authorList>
    </citation>
    <scope>IDENTIFICATION IN POL-DELTA COMPLEX</scope>
</reference>
<reference key="17">
    <citation type="journal article" date="2008" name="Mol. Cell">
        <title>Kinase-selective enrichment enables quantitative phosphoproteomics of the kinome across the cell cycle.</title>
        <authorList>
            <person name="Daub H."/>
            <person name="Olsen J.V."/>
            <person name="Bairlein M."/>
            <person name="Gnad F."/>
            <person name="Oppermann F.S."/>
            <person name="Korner R."/>
            <person name="Greff Z."/>
            <person name="Keri G."/>
            <person name="Stemmann O."/>
            <person name="Mann M."/>
        </authorList>
    </citation>
    <scope>PHOSPHORYLATION [LARGE SCALE ANALYSIS] AT SER-307</scope>
    <scope>IDENTIFICATION BY MASS SPECTROMETRY [LARGE SCALE ANALYSIS]</scope>
    <source>
        <tissue>Cervix carcinoma</tissue>
    </source>
</reference>
<reference key="18">
    <citation type="journal article" date="2008" name="Proc. Natl. Acad. Sci. U.S.A.">
        <title>A quantitative atlas of mitotic phosphorylation.</title>
        <authorList>
            <person name="Dephoure N."/>
            <person name="Zhou C."/>
            <person name="Villen J."/>
            <person name="Beausoleil S.A."/>
            <person name="Bakalarski C.E."/>
            <person name="Elledge S.J."/>
            <person name="Gygi S.P."/>
        </authorList>
    </citation>
    <scope>PHOSPHORYLATION [LARGE SCALE ANALYSIS] AT SER-307; SER-407; SER-409; THR-411; SER-413 AND SER-458</scope>
    <scope>IDENTIFICATION BY MASS SPECTROMETRY [LARGE SCALE ANALYSIS]</scope>
    <source>
        <tissue>Cervix carcinoma</tissue>
    </source>
</reference>
<reference key="19">
    <citation type="journal article" date="2009" name="Anal. Chem.">
        <title>Lys-N and trypsin cover complementary parts of the phosphoproteome in a refined SCX-based approach.</title>
        <authorList>
            <person name="Gauci S."/>
            <person name="Helbig A.O."/>
            <person name="Slijper M."/>
            <person name="Krijgsveld J."/>
            <person name="Heck A.J."/>
            <person name="Mohammed S."/>
        </authorList>
    </citation>
    <scope>IDENTIFICATION BY MASS SPECTROMETRY [LARGE SCALE ANALYSIS]</scope>
</reference>
<reference key="20">
    <citation type="journal article" date="2009" name="Mol. Cell. Proteomics">
        <title>Large-scale proteomics analysis of the human kinome.</title>
        <authorList>
            <person name="Oppermann F.S."/>
            <person name="Gnad F."/>
            <person name="Olsen J.V."/>
            <person name="Hornberger R."/>
            <person name="Greff Z."/>
            <person name="Keri G."/>
            <person name="Mann M."/>
            <person name="Daub H."/>
        </authorList>
    </citation>
    <scope>PHOSPHORYLATION [LARGE SCALE ANALYSIS] AT SER-307</scope>
    <scope>IDENTIFICATION BY MASS SPECTROMETRY [LARGE SCALE ANALYSIS]</scope>
</reference>
<reference key="21">
    <citation type="journal article" date="2009" name="Nucleic Acids Res.">
        <title>DNA damage alters DNA polymerase delta to a form that exhibits increased discrimination against modified template bases and mismatched primers.</title>
        <authorList>
            <person name="Meng X."/>
            <person name="Zhou Y."/>
            <person name="Zhang S."/>
            <person name="Lee E.Y."/>
            <person name="Frick D.N."/>
            <person name="Lee M.Y."/>
        </authorList>
    </citation>
    <scope>FUNCTION</scope>
    <scope>COMPARISON BETWEEN POL-DELTA3 AND POL-DELTA4</scope>
</reference>
<reference key="22">
    <citation type="journal article" date="2010" name="Biochemistry">
        <title>The p12 subunit of human polymerase delta modulates the rate and fidelity of DNA synthesis.</title>
        <authorList>
            <person name="Meng X."/>
            <person name="Zhou Y."/>
            <person name="Lee E.Y."/>
            <person name="Lee M.Y."/>
            <person name="Frick D.N."/>
        </authorList>
    </citation>
    <scope>FUNCTION</scope>
    <scope>IDENTIFICATION IN POL-DELTA COMPLEX</scope>
</reference>
<reference key="23">
    <citation type="journal article" date="2010" name="Mol. Cell">
        <title>Three DNA polymerases, recruited by different mechanisms, carry out NER repair synthesis in human cells.</title>
        <authorList>
            <person name="Ogi T."/>
            <person name="Limsirichaikul S."/>
            <person name="Overmeer R.M."/>
            <person name="Volker M."/>
            <person name="Takenaka K."/>
            <person name="Cloney R."/>
            <person name="Nakazawa Y."/>
            <person name="Niimi A."/>
            <person name="Miki Y."/>
            <person name="Jaspers N.G."/>
            <person name="Mullenders L.H."/>
            <person name="Yamashita S."/>
            <person name="Fousteri M.I."/>
            <person name="Lehmann A.R."/>
        </authorList>
    </citation>
    <scope>FUNCTION IN NUCLEOTIDE EXCISION REPAIR</scope>
    <scope>SUBCELLULAR LOCATION</scope>
</reference>
<reference key="24">
    <citation type="journal article" date="2010" name="Sci. Signal.">
        <title>Quantitative phosphoproteomics reveals widespread full phosphorylation site occupancy during mitosis.</title>
        <authorList>
            <person name="Olsen J.V."/>
            <person name="Vermeulen M."/>
            <person name="Santamaria A."/>
            <person name="Kumar C."/>
            <person name="Miller M.L."/>
            <person name="Jensen L.J."/>
            <person name="Gnad F."/>
            <person name="Cox J."/>
            <person name="Jensen T.S."/>
            <person name="Nigg E.A."/>
            <person name="Brunak S."/>
            <person name="Mann M."/>
        </authorList>
    </citation>
    <scope>PHOSPHORYLATION [LARGE SCALE ANALYSIS] AT SER-307</scope>
    <scope>IDENTIFICATION BY MASS SPECTROMETRY [LARGE SCALE ANALYSIS]</scope>
    <source>
        <tissue>Cervix carcinoma</tissue>
    </source>
</reference>
<reference key="25">
    <citation type="journal article" date="2011" name="BMC Syst. Biol.">
        <title>Initial characterization of the human central proteome.</title>
        <authorList>
            <person name="Burkard T.R."/>
            <person name="Planyavsky M."/>
            <person name="Kaupe I."/>
            <person name="Breitwieser F.P."/>
            <person name="Buerckstuemmer T."/>
            <person name="Bennett K.L."/>
            <person name="Superti-Furga G."/>
            <person name="Colinge J."/>
        </authorList>
    </citation>
    <scope>IDENTIFICATION BY MASS SPECTROMETRY [LARGE SCALE ANALYSIS]</scope>
</reference>
<reference key="26">
    <citation type="journal article" date="2011" name="Sci. Signal.">
        <title>System-wide temporal characterization of the proteome and phosphoproteome of human embryonic stem cell differentiation.</title>
        <authorList>
            <person name="Rigbolt K.T."/>
            <person name="Prokhorova T.A."/>
            <person name="Akimov V."/>
            <person name="Henningsen J."/>
            <person name="Johansen P.T."/>
            <person name="Kratchmarova I."/>
            <person name="Kassem M."/>
            <person name="Mann M."/>
            <person name="Olsen J.V."/>
            <person name="Blagoev B."/>
        </authorList>
    </citation>
    <scope>PHOSPHORYLATION [LARGE SCALE ANALYSIS] AT SER-307</scope>
    <scope>IDENTIFICATION BY MASS SPECTROMETRY [LARGE SCALE ANALYSIS]</scope>
</reference>
<reference key="27">
    <citation type="journal article" date="2012" name="Biochemistry">
        <title>Phosphorylation of the p68 subunit of Pol delta acts as a molecular switch to regulate its interaction with PCNA.</title>
        <authorList>
            <person name="Rahmeh A.A."/>
            <person name="Zhou Y."/>
            <person name="Xie B."/>
            <person name="Li H."/>
            <person name="Lee E.Y."/>
            <person name="Lee M.Y."/>
        </authorList>
    </citation>
    <scope>INTERACTION WITH PCNA</scope>
    <scope>DOMAIN</scope>
    <scope>PHOSPHORYLATION AT SER-458</scope>
    <scope>MUTAGENESIS OF 456-GLN--LYS-466; SER-458 AND 459-ILE--PHE-463</scope>
</reference>
<reference key="28">
    <citation type="journal article" date="2012" name="Cell Cycle">
        <title>Spatiotemporal recruitment of human DNA polymerase delta to sites of UV damage.</title>
        <authorList>
            <person name="Chea J."/>
            <person name="Zhang S."/>
            <person name="Zhao H."/>
            <person name="Zhang Z."/>
            <person name="Lee E.Y."/>
            <person name="Darzynkiewicz Z."/>
            <person name="Lee M.Y."/>
        </authorList>
    </citation>
    <scope>SUBCELLULAR LOCATION</scope>
    <scope>IDENTIFICATION IN POL-DELTA COMPLEX</scope>
    <scope>IDENTIFICATION IN POL-ZETA COMPLEX</scope>
    <scope>DEVELOPMENTAL STAGE</scope>
</reference>
<reference key="29">
    <citation type="journal article" date="2012" name="Mol. Cell. Proteomics">
        <title>Comparative large-scale characterisation of plant vs. mammal proteins reveals similar and idiosyncratic N-alpha acetylation features.</title>
        <authorList>
            <person name="Bienvenut W.V."/>
            <person name="Sumpton D."/>
            <person name="Martinez A."/>
            <person name="Lilla S."/>
            <person name="Espagne C."/>
            <person name="Meinnel T."/>
            <person name="Giglione C."/>
        </authorList>
    </citation>
    <scope>ACETYLATION [LARGE SCALE ANALYSIS] AT ALA-2</scope>
    <scope>CLEAVAGE OF INITIATOR METHIONINE [LARGE SCALE ANALYSIS]</scope>
    <scope>IDENTIFICATION BY MASS SPECTROMETRY [LARGE SCALE ANALYSIS]</scope>
</reference>
<reference key="30">
    <citation type="journal article" date="2013" name="DNA Repair">
        <title>Dynamics of enzymatic interactions during short flap human Okazaki fragment processing by two forms of human DNA polymerase delta.</title>
        <authorList>
            <person name="Lin S.H."/>
            <person name="Wang X."/>
            <person name="Zhang S."/>
            <person name="Zhang Z."/>
            <person name="Lee E.Y."/>
            <person name="Lee M.Y."/>
        </authorList>
    </citation>
    <scope>FUNCTION IN OKAZAKI FRAGMENT PROCESSING</scope>
</reference>
<reference key="31">
    <citation type="journal article" date="2013" name="J. Biol. Chem.">
        <title>A novel function of CRL4(Cdt2): regulation of the subunit structure of DNA polymerase delta in response to DNA damage and during the S phase.</title>
        <authorList>
            <person name="Zhang S."/>
            <person name="Zhao H."/>
            <person name="Darzynkiewicz Z."/>
            <person name="Zhou P."/>
            <person name="Zhang Z."/>
            <person name="Lee E.Y."/>
            <person name="Lee M.Y."/>
        </authorList>
    </citation>
    <scope>POL-DELTA3 COMPLEX EXPRESSION DURING CELL CYCLE</scope>
</reference>
<reference key="32">
    <citation type="journal article" date="2013" name="J. Proteome Res.">
        <title>Toward a comprehensive characterization of a human cancer cell phosphoproteome.</title>
        <authorList>
            <person name="Zhou H."/>
            <person name="Di Palma S."/>
            <person name="Preisinger C."/>
            <person name="Peng M."/>
            <person name="Polat A.N."/>
            <person name="Heck A.J."/>
            <person name="Mohammed S."/>
        </authorList>
    </citation>
    <scope>PHOSPHORYLATION [LARGE SCALE ANALYSIS] AT THR-277; SER-307 AND SER-458</scope>
    <scope>IDENTIFICATION BY MASS SPECTROMETRY [LARGE SCALE ANALYSIS]</scope>
    <source>
        <tissue>Cervix carcinoma</tissue>
        <tissue>Erythroleukemia</tissue>
    </source>
</reference>
<reference key="33">
    <citation type="journal article" date="2014" name="Nat. Struct. Mol. Biol.">
        <title>Uncovering global SUMOylation signaling networks in a site-specific manner.</title>
        <authorList>
            <person name="Hendriks I.A."/>
            <person name="D'Souza R.C."/>
            <person name="Yang B."/>
            <person name="Verlaan-de Vries M."/>
            <person name="Mann M."/>
            <person name="Vertegaal A.C."/>
        </authorList>
    </citation>
    <scope>SUMOYLATION [LARGE SCALE ANALYSIS] AT LYS-258</scope>
    <scope>IDENTIFICATION BY MASS SPECTROMETRY [LARGE SCALE ANALYSIS]</scope>
</reference>
<reference key="34">
    <citation type="journal article" date="2014" name="Proc. Natl. Acad. Sci. U.S.A.">
        <title>Human Pol zeta purified with accessory subunits is active in translesion DNA synthesis and complements Pol eta in cisplatin bypass.</title>
        <authorList>
            <person name="Lee Y.S."/>
            <person name="Gregory M.T."/>
            <person name="Yang W."/>
        </authorList>
    </citation>
    <scope>FUNCTION IN TLS</scope>
    <scope>IDENTIFICATION IN COMPLEX WITH REV3L; MAD2L2 AND POLD2</scope>
</reference>
<reference key="35">
    <citation type="journal article" date="2014" name="Science">
        <title>Break-induced replication repair of damaged forks induces genomic duplications in human cells.</title>
        <authorList>
            <person name="Costantino L."/>
            <person name="Sotiriou S.K."/>
            <person name="Rantala J.K."/>
            <person name="Magin S."/>
            <person name="Mladenov E."/>
            <person name="Helleday T."/>
            <person name="Haber J.E."/>
            <person name="Iliakis G."/>
            <person name="Kallioniemi O.P."/>
            <person name="Halazonetis T.D."/>
        </authorList>
    </citation>
    <scope>FUNCTION IN BIR</scope>
</reference>
<reference key="36">
    <citation type="journal article" date="2015" name="Nucleic Acids Res.">
        <title>The POLD3 subunit of DNA polymerase delta can promote translesion synthesis independently of DNA polymerase zeta.</title>
        <authorList>
            <person name="Hirota K."/>
            <person name="Yoshikiyo K."/>
            <person name="Guilbaud G."/>
            <person name="Tsurimoto T."/>
            <person name="Murai J."/>
            <person name="Tsuda M."/>
            <person name="Phillips L.G."/>
            <person name="Narita T."/>
            <person name="Nishihara K."/>
            <person name="Kobayashi K."/>
            <person name="Yamada K."/>
            <person name="Nakamura J."/>
            <person name="Pommier Y."/>
            <person name="Lehmann A."/>
            <person name="Sale J.E."/>
            <person name="Takeda S."/>
        </authorList>
    </citation>
    <scope>FUNCTION IN TLS</scope>
</reference>
<reference key="37">
    <citation type="journal article" date="2016" name="Nucleic Acids Res.">
        <title>In vivo evidence for translesion synthesis by the replicative DNA polymerase delta.</title>
        <authorList>
            <person name="Hirota K."/>
            <person name="Tsuda M."/>
            <person name="Mohiuddin M."/>
            <person name="Tsurimoto T."/>
            <person name="Cohen I.S."/>
            <person name="Livneh Z."/>
            <person name="Kobayashi K."/>
            <person name="Narita T."/>
            <person name="Nishihara K."/>
            <person name="Murai J."/>
            <person name="Iwai S."/>
            <person name="Guilbaud G."/>
            <person name="Sale J.E."/>
            <person name="Takeda S."/>
        </authorList>
    </citation>
    <scope>FUNCTION IN TLS</scope>
</reference>
<reference key="38">
    <citation type="journal article" date="2017" name="Nat. Struct. Mol. Biol.">
        <title>Site-specific mapping of the human SUMO proteome reveals co-modification with phosphorylation.</title>
        <authorList>
            <person name="Hendriks I.A."/>
            <person name="Lyon D."/>
            <person name="Young C."/>
            <person name="Jensen L.J."/>
            <person name="Vertegaal A.C."/>
            <person name="Nielsen M.L."/>
        </authorList>
    </citation>
    <scope>SUMOYLATION [LARGE SCALE ANALYSIS] AT LYS-258; LYS-261 AND LYS-433</scope>
    <scope>IDENTIFICATION BY MASS SPECTROMETRY [LARGE SCALE ANALYSIS]</scope>
</reference>
<reference key="39">
    <citation type="journal article" date="2008" name="Cell Cycle">
        <title>X-ray structure of the complex of regulatory subunits of human DNA polymerase delta.</title>
        <authorList>
            <person name="Baranovskiy A.G."/>
            <person name="Babayeva N.D."/>
            <person name="Liston V.G."/>
            <person name="Rogozin I.B."/>
            <person name="Koonin E.V."/>
            <person name="Pavlov Y.I."/>
            <person name="Vassylyev D.G."/>
            <person name="Tahirov T.H."/>
        </authorList>
    </citation>
    <scope>X-RAY CRYSTALLOGRAPHY (3.0 ANGSTROMS) OF 1-144 IN COMPLEX WITH POLD2</scope>
    <scope>INTERACTION WITH POLD2</scope>
</reference>
<reference key="40">
    <citation type="journal article" date="2011" name="Nature">
        <title>Exome sequencing identifies frequent mutation of the SWI/SNF complex gene PBRM1 in renal carcinoma.</title>
        <authorList>
            <person name="Varela I."/>
            <person name="Tarpey P."/>
            <person name="Raine K."/>
            <person name="Huang D."/>
            <person name="Ong C.K."/>
            <person name="Stephens P."/>
            <person name="Davies H."/>
            <person name="Jones D."/>
            <person name="Lin M.L."/>
            <person name="Teague J."/>
            <person name="Bignell G."/>
            <person name="Butler A."/>
            <person name="Cho J."/>
            <person name="Dalgliesh G.L."/>
            <person name="Galappaththige D."/>
            <person name="Greenman C."/>
            <person name="Hardy C."/>
            <person name="Jia M."/>
            <person name="Latimer C."/>
            <person name="Lau K.W."/>
            <person name="Marshall J."/>
            <person name="McLaren S."/>
            <person name="Menzies A."/>
            <person name="Mudie L."/>
            <person name="Stebbings L."/>
            <person name="Largaespada D.A."/>
            <person name="Wessels L.F.A."/>
            <person name="Richard S."/>
            <person name="Kahnoski R.J."/>
            <person name="Anema J."/>
            <person name="Tuveson D.A."/>
            <person name="Perez-Mancera P.A."/>
            <person name="Mustonen V."/>
            <person name="Fischer A."/>
            <person name="Adams D.J."/>
            <person name="Rust A."/>
            <person name="Chan-On W."/>
            <person name="Subimerb C."/>
            <person name="Dykema K."/>
            <person name="Furge K."/>
            <person name="Campbell P.J."/>
            <person name="Teh B.T."/>
            <person name="Stratton M.R."/>
            <person name="Futreal P.A."/>
        </authorList>
    </citation>
    <scope>VARIANTS VAL-194 AND LEU-195</scope>
</reference>
<reference key="41">
    <citation type="journal article" date="2023" name="Clin. Immunol.">
        <title>POLD3 deficiency is associated with severe combined immunodeficiency, neurodevelopmental delay, and hearing impairment.</title>
        <authorList>
            <person name="Mehawej C."/>
            <person name="Chouery E."/>
            <person name="Azar-Atallah S."/>
            <person name="Shebaby W."/>
            <person name="Delague V."/>
            <person name="Mansour I."/>
            <person name="Mustapha M."/>
            <person name="Lefranc G."/>
            <person name="Megarbane A."/>
        </authorList>
    </citation>
    <scope>VARIANT IMD122 THR-10</scope>
    <scope>CHARACTERIZATION OF VARIANT IMD122 THR-10</scope>
    <scope>INVOLVEMENT IN IMD122</scope>
</reference>
<reference key="42">
    <citation type="journal article" date="2023" name="J. Clin. Immunol.">
        <title>Human Autosomal Recessive DNA Polymerase Delta 3 Deficiency Presenting as Omenn Syndrome.</title>
        <authorList>
            <person name="Riestra M.R."/>
            <person name="Pillay B.A."/>
            <person name="Willemsen M."/>
            <person name="Kienapfel V."/>
            <person name="Ehlers L."/>
            <person name="Delafontaine S."/>
            <person name="Pinton A."/>
            <person name="Wouters M."/>
            <person name="Hombrouck A."/>
            <person name="Sauer K."/>
            <person name="Bossuyt X."/>
            <person name="Voet A."/>
            <person name="Soenen S.J."/>
            <person name="Conde C.D."/>
            <person name="Bucciol G."/>
            <person name="Boztug K."/>
            <person name="Humblet-Baron S."/>
            <person name="Touzart A."/>
            <person name="Rieux-Laucat F."/>
            <person name="Notarangelo L.D."/>
            <person name="Moens L."/>
            <person name="Meyts I."/>
        </authorList>
    </citation>
    <scope>VARIANT IMD122 THR-373</scope>
    <scope>FUNCTION</scope>
</reference>
<sequence>MADQLYLENIDEFVTDQNKIVTYKWLSYTLGVHVNQAKQMLYDYVERKRKENSGAQLHVTYLVSGSLIQNGHSCHKVAVVREDKLEAVKSKLAVTASIHVYSIQKAMLKDSGPLFNTDYDILKSNLQNCSKFSAIQCAAAVPRAPAESSSSSKKFEQSHLHMSSETQANNELTTNGHGPPASKQVSQQPKGIMGMFASKAAAKTQETNKETKTEAKEVTNASAAGNKAPGKGNMMSNFFGKAAMNKFKVNLDSEQAVKEEKIVEQPTVSVTEPKLATPAGLKKSSKKAEPVKVLQKEKKRGKRVALSDDETKETENMRKKRRRIKLPESDSSEDEVFPDSPGAYEAESPSPPPPPSPPLEPVPKTEPEPPSVKSSSGENKRKRKRVLKSKTYLDGEGCIVTEKVYESESCTDSEEELNMKTSSVHRPPAMTVKKEPREERKGPKKGTAALGKANRQVSITGFFQRK</sequence>
<protein>
    <recommendedName>
        <fullName>DNA polymerase delta subunit 3</fullName>
    </recommendedName>
    <alternativeName>
        <fullName evidence="28">DNA polymerase delta subunit C</fullName>
    </alternativeName>
    <alternativeName>
        <fullName>DNA polymerase delta subunit p66</fullName>
    </alternativeName>
    <alternativeName>
        <fullName evidence="30 31">DNA polymerase delta subunit p68</fullName>
    </alternativeName>
</protein>
<name>DPOD3_HUMAN</name>
<keyword id="KW-0002">3D-structure</keyword>
<keyword id="KW-0007">Acetylation</keyword>
<keyword id="KW-0025">Alternative splicing</keyword>
<keyword id="KW-0963">Cytoplasm</keyword>
<keyword id="KW-0903">Direct protein sequencing</keyword>
<keyword id="KW-0225">Disease variant</keyword>
<keyword id="KW-0227">DNA damage</keyword>
<keyword id="KW-0228">DNA excision</keyword>
<keyword id="KW-0234">DNA repair</keyword>
<keyword id="KW-0235">DNA replication</keyword>
<keyword id="KW-1017">Isopeptide bond</keyword>
<keyword id="KW-0539">Nucleus</keyword>
<keyword id="KW-0597">Phosphoprotein</keyword>
<keyword id="KW-1267">Proteomics identification</keyword>
<keyword id="KW-1185">Reference proteome</keyword>
<keyword id="KW-0832">Ubl conjugation</keyword>
<proteinExistence type="evidence at protein level"/>
<feature type="initiator methionine" description="Removed" evidence="27 39">
    <location>
        <position position="1"/>
    </location>
</feature>
<feature type="chain" id="PRO_0000186047" description="DNA polymerase delta subunit 3">
    <location>
        <begin position="2"/>
        <end position="466"/>
    </location>
</feature>
<feature type="region of interest" description="Disordered" evidence="2">
    <location>
        <begin position="169"/>
        <end position="188"/>
    </location>
</feature>
<feature type="region of interest" description="Disordered" evidence="2">
    <location>
        <begin position="199"/>
        <end position="232"/>
    </location>
</feature>
<feature type="region of interest" description="Disordered" evidence="2">
    <location>
        <begin position="274"/>
        <end position="393"/>
    </location>
</feature>
<feature type="region of interest" description="Disordered" evidence="2">
    <location>
        <begin position="406"/>
        <end position="466"/>
    </location>
</feature>
<feature type="short sequence motif" description="PIP-box" evidence="6 17">
    <location>
        <begin position="456"/>
        <end position="463"/>
    </location>
</feature>
<feature type="compositionally biased region" description="Basic and acidic residues" evidence="2">
    <location>
        <begin position="206"/>
        <end position="217"/>
    </location>
</feature>
<feature type="compositionally biased region" description="Basic and acidic residues" evidence="2">
    <location>
        <begin position="286"/>
        <end position="296"/>
    </location>
</feature>
<feature type="compositionally biased region" description="Pro residues" evidence="2">
    <location>
        <begin position="349"/>
        <end position="361"/>
    </location>
</feature>
<feature type="compositionally biased region" description="Basic and acidic residues" evidence="2">
    <location>
        <begin position="432"/>
        <end position="441"/>
    </location>
</feature>
<feature type="compositionally biased region" description="Polar residues" evidence="2">
    <location>
        <begin position="455"/>
        <end position="466"/>
    </location>
</feature>
<feature type="modified residue" description="N-acetylalanine" evidence="27 39">
    <location>
        <position position="2"/>
    </location>
</feature>
<feature type="modified residue" description="Phosphothreonine" evidence="40">
    <location>
        <position position="277"/>
    </location>
</feature>
<feature type="modified residue" description="Phosphoserine" evidence="33 34 35 36 37 38 40">
    <location>
        <position position="307"/>
    </location>
</feature>
<feature type="modified residue" description="Phosphoserine" evidence="34">
    <location>
        <position position="407"/>
    </location>
</feature>
<feature type="modified residue" description="Phosphoserine" evidence="34">
    <location>
        <position position="409"/>
    </location>
</feature>
<feature type="modified residue" description="Phosphothreonine" evidence="34">
    <location>
        <position position="411"/>
    </location>
</feature>
<feature type="modified residue" description="Phosphoserine" evidence="34">
    <location>
        <position position="413"/>
    </location>
</feature>
<feature type="modified residue" description="Phosphoserine" evidence="17 34 40">
    <location>
        <position position="458"/>
    </location>
</feature>
<feature type="cross-link" description="Glycyl lysine isopeptide (Lys-Gly) (interchain with G-Cter in SUMO); alternate" evidence="10">
    <location>
        <position position="258"/>
    </location>
</feature>
<feature type="cross-link" description="Glycyl lysine isopeptide (Lys-Gly) (interchain with G-Cter in SUMO2); alternate" evidence="41 42">
    <location>
        <position position="258"/>
    </location>
</feature>
<feature type="cross-link" description="Glycyl lysine isopeptide (Lys-Gly) (interchain with G-Cter in SUMO2)" evidence="42">
    <location>
        <position position="261"/>
    </location>
</feature>
<feature type="cross-link" description="Glycyl lysine isopeptide (Lys-Gly) (interchain with G-Cter in SUMO); alternate" evidence="10">
    <location>
        <position position="433"/>
    </location>
</feature>
<feature type="cross-link" description="Glycyl lysine isopeptide (Lys-Gly) (interchain with G-Cter in SUMO2); alternate" evidence="42">
    <location>
        <position position="433"/>
    </location>
</feature>
<feature type="splice variant" id="VSP_054149" description="In isoform 3." evidence="29">
    <location>
        <begin position="1"/>
        <end position="106"/>
    </location>
</feature>
<feature type="splice variant" id="VSP_054150" description="In isoform 2." evidence="29">
    <location>
        <begin position="1"/>
        <end position="39"/>
    </location>
</feature>
<feature type="sequence variant" id="VAR_089949" description="In IMD122; uncertain significance; the mutant protein is not detected in patient cells." evidence="25">
    <original>I</original>
    <variation>T</variation>
    <location>
        <position position="10"/>
    </location>
</feature>
<feature type="sequence variant" id="VAR_064745" description="Found in a renal cell carcinoma sample; somatic mutation." evidence="16">
    <original>G</original>
    <variation>V</variation>
    <location>
        <position position="194"/>
    </location>
</feature>
<feature type="sequence variant" id="VAR_064746" description="Found in a renal cell carcinoma sample; somatic mutation." evidence="16">
    <original>M</original>
    <variation>L</variation>
    <location>
        <position position="195"/>
    </location>
</feature>
<feature type="sequence variant" id="VAR_089950" description="In IMD122; uncertain significance; dbSNP:rs181857010." evidence="26">
    <original>K</original>
    <variation>T</variation>
    <location>
        <position position="373"/>
    </location>
</feature>
<feature type="mutagenesis site" description="Partially loss of sumoylation. Complete loss of sumoylation; when associated with R-433." evidence="10">
    <original>K</original>
    <variation>R</variation>
    <location>
        <position position="258"/>
    </location>
</feature>
<feature type="mutagenesis site" description="No effect on sumoylation." evidence="10">
    <original>K</original>
    <variation>R</variation>
    <location>
        <position position="325"/>
    </location>
</feature>
<feature type="mutagenesis site" description="Partially loss of sumoylation. Complete loss of SUMO3-sumoylation; when associated with R-285." evidence="10">
    <original>K</original>
    <variation>R</variation>
    <location>
        <position position="433"/>
    </location>
</feature>
<feature type="mutagenesis site" description="Complete loss of PCNA binding." evidence="17">
    <location>
        <begin position="456"/>
        <end position="466"/>
    </location>
</feature>
<feature type="mutagenesis site" description="Partial loss of PCNA binding (60% of wild-type) and strong decrease of PCNA stimulation of Pol-delta4 polymerase activity." evidence="17">
    <original>S</original>
    <variation>A</variation>
    <location>
        <position position="458"/>
    </location>
</feature>
<feature type="mutagenesis site" description="Complete loss of PCNA binding." evidence="17">
    <original>ITGFF</original>
    <variation>ATGAA</variation>
    <location>
        <begin position="459"/>
        <end position="463"/>
    </location>
</feature>
<feature type="helix" evidence="45">
    <location>
        <begin position="3"/>
        <end position="14"/>
    </location>
</feature>
<feature type="turn" evidence="45">
    <location>
        <begin position="15"/>
        <end position="17"/>
    </location>
</feature>
<feature type="helix" evidence="45">
    <location>
        <begin position="23"/>
        <end position="30"/>
    </location>
</feature>
<feature type="helix" evidence="45">
    <location>
        <begin position="34"/>
        <end position="52"/>
    </location>
</feature>
<feature type="strand" evidence="45">
    <location>
        <begin position="58"/>
        <end position="81"/>
    </location>
</feature>
<feature type="turn" evidence="45">
    <location>
        <begin position="82"/>
        <end position="84"/>
    </location>
</feature>
<feature type="helix" evidence="45">
    <location>
        <begin position="85"/>
        <end position="91"/>
    </location>
</feature>
<feature type="strand" evidence="45">
    <location>
        <begin position="93"/>
        <end position="106"/>
    </location>
</feature>
<feature type="strand" evidence="45">
    <location>
        <begin position="109"/>
        <end position="111"/>
    </location>
</feature>
<feature type="helix" evidence="45">
    <location>
        <begin position="113"/>
        <end position="125"/>
    </location>
</feature>
<feature type="helix" evidence="45">
    <location>
        <begin position="129"/>
        <end position="131"/>
    </location>
</feature>
<feature type="strand" evidence="45">
    <location>
        <begin position="134"/>
        <end position="136"/>
    </location>
</feature>
<feature type="strand" evidence="44">
    <location>
        <begin position="238"/>
        <end position="244"/>
    </location>
</feature>
<feature type="helix" evidence="43">
    <location>
        <begin position="459"/>
        <end position="461"/>
    </location>
</feature>
<comment type="function">
    <text evidence="3 4 6 9 13 14 15 20 21 22 23 24 26">Accessory component of both the DNA polymerase delta complex and the DNA polymerase zeta complex (PubMed:17317665, PubMed:22801543, PubMed:24449906). As a component of the trimeric and tetrameric DNA polymerase delta complexes (Pol-delta3 and Pol-delta4, respectively), plays a role in high fidelity genome replication, including in lagging strand synthesis, and repair. Required for optimal Pol-delta activity. Stabilizes the Pol-delta complex and plays a major role in Pol-delta stimulation by PCNA (PubMed:10219083, PubMed:10852724, PubMed:11595739, PubMed:16510448, PubMed:24035200). Pol-delta3 and Pol-delta4 are characterized by the absence or the presence of POLD4. They exhibit differences in catalytic activity. Most notably, Pol-delta3 shows higher proofreading activity than Pol-delta4 (PubMed:19074196, PubMed:20334433). Although both Pol-delta3 and Pol-delta4 process Okazaki fragments in vitro, Pol-delta3 may also be better suited to fulfill this task, exhibiting near-absence of strand displacement activity compared to Pol-delta4 and stalling on encounter with the 5'-blocking oligonucleotides. Pol-delta3 idling process may avoid the formation of a gap, while maintaining a nick that can be readily ligated (PubMed:24035200). Along with DNA polymerase kappa, DNA polymerase delta carries out approximately half of nucleotide excision repair (NER) synthesis following UV irradiation. In this context, POLD3, along with PCNA and RFC1-replication factor C complex, is required to recruit POLD1, the catalytic subunit of the polymerase delta complex, to DNA damage sites (PubMed:20227374). Under conditions of DNA replication stress, required for the repair of broken replication forks through break-induced replication (BIR) (PubMed:24310611). Involved in the translesion synthesis (TLS) of templates carrying O6-methylguanine or abasic sites performed by Pol-delta4, independently of DNA polymerase zeta (REV3L) or eta (POLH). Facilitates abasic site bypass by DNA polymerase delta by promoting extension from the nucleotide inserted opposite the lesion (PubMed:19074196, PubMed:25628356, PubMed:27185888). Also involved in TLS, as a component of the tetrameric DNA polymerase zeta complex. Along with POLD2, dramatically increases the efficiency and processivity of DNA synthesis of the DNA polymerase zeta complex compared to the minimal zeta complex, consisting of only REV3L and REV7 (PubMed:24449906).</text>
</comment>
<comment type="subunit">
    <text evidence="5 6 7 8 9 11 12 17 18 19 22">Component of both the DNA polymerase delta and DNA polymerase zeta complexes (PubMed:17317665, PubMed:22801543, PubMed:24449906). The tetrameric DNA polymerase delta complex (Pol-delta4), which consists of POLD1/p125, POLD2/p50, POLD3/p66/p68 and POLD4/p12, with POLD1 bearing DNA polymerase and 3' to 5' proofreading exonuclease activities (PubMed:11328591, PubMed:11595739, PubMed:17317665, PubMed:22801543). Within this complex, directly interacts with POLD2 (PubMed:11328591, PubMed:16510448, PubMed:18818516). Following stress caused by DNA damaging agents or by replication stress, POLD4 is degraded and Pol-delta4 is converted into a trimeric form of the complex (Pol-delta3), which consists of POLD1, POLD2 and POLD3. Pol-delta3 is the major form occurring at S phase replication sites, as well as DNA damage sites (PubMed:11595739, PubMed:17317665, PubMed:22801543, PubMed:23913683). Directly interacts with PCNA, as do POLD1 and POLD4; this interaction stimulates Pol-delta polymerase activity (PubMed:11328591, PubMed:11595739, PubMed:12403614, PubMed:16510448, PubMed:22148433). POLD3 phosphorylation at Ser-458 impairs PCNA binding (PubMed:22148433). Component of the DNA polymerase zeta complex (POLZ), which consists of REV3L, MAD2L2, POLD2 and POLD3, with REV3L bearing DNA polymerase catalytic activity (PubMed:24449906). The DNA polymerase delta complex interacts with POLDIP2; this interaction is probably mediated through direct binding to POLD2 (PubMed:12522211).</text>
</comment>
<comment type="interaction">
    <interactant intactId="EBI-864956">
        <id>Q15054</id>
    </interactant>
    <interactant intactId="EBI-358311">
        <id>P12004</id>
        <label>PCNA</label>
    </interactant>
    <organismsDiffer>false</organismsDiffer>
    <experiments>8</experiments>
</comment>
<comment type="interaction">
    <interactant intactId="EBI-864956">
        <id>Q15054</id>
    </interactant>
    <interactant intactId="EBI-372354">
        <id>P49005</id>
        <label>POLD2</label>
    </interactant>
    <organismsDiffer>false</organismsDiffer>
    <experiments>11</experiments>
</comment>
<comment type="subcellular location">
    <subcellularLocation>
        <location evidence="1">Cytoplasm</location>
    </subcellularLocation>
    <subcellularLocation>
        <location evidence="6 14 18">Nucleus</location>
    </subcellularLocation>
    <text evidence="6 14 18">Partially colocalizes with PCNA and POLD1 at S phase replication sites (PubMed:11595739). Recruited to DNA damage sites within 2 hours following UV irradiation (PubMed:20227374, PubMed:22801543).</text>
</comment>
<comment type="alternative products">
    <event type="alternative splicing"/>
    <isoform>
        <id>Q15054-1</id>
        <name>1</name>
        <sequence type="displayed"/>
    </isoform>
    <isoform>
        <id>Q15054-2</id>
        <name>2</name>
        <sequence type="described" ref="VSP_054150"/>
    </isoform>
    <isoform>
        <id>Q15054-3</id>
        <name>3</name>
        <sequence type="described" ref="VSP_054149"/>
    </isoform>
</comment>
<comment type="developmental stage">
    <text evidence="18">Expression is cell cycle-dependent, with highest levels in G2/M phase and lowest in G1.</text>
</comment>
<comment type="domain">
    <text evidence="6 17">The PIP-box mediates the interaction with PCNA.</text>
</comment>
<comment type="PTM">
    <text evidence="10">Ubiquitinated, but not targeted to the proteasome (PubMed:16934752). Sumoylated (PubMed:16934752, PubMed:25218447). Sumoylation with SUMO3 may be predominant (PubMed:16934752).</text>
</comment>
<comment type="PTM">
    <text evidence="6 17">Phosphorylation at Ser-458 is catalyzed in vitro by PKA. It is thought to decrease the affinity for PCNA and Pol-delta4 processivity (PubMed:22148433). Can also be phosphorylated in vitro by CDK1-cyclin-A complex, as well as CDK2-cyclin-A and CDK2-cyclin-E complexes. PCNA interferes with CDK-cyclin phosphorylation (PubMed:11595739).</text>
</comment>
<comment type="disease" evidence="25 26">
    <disease id="DI-06920">
        <name>Immunodeficiency 122</name>
        <acronym>IMD122</acronym>
        <description>An autosomal recessive, severe immunologic disorder characterized by recurrent viral and bacterial infections of the respiratory tract and skin, appearing in early infancy. Additional clinical features include poor overall growth, global developmental delay with poor motor skills, impaired intellectual development, and poor or absent speech acquisition. Some patients have diffuse skin rash, erythroderma, sensorineural hearing loss, lymphadenopathy, dysmorphic facial features, and tooth abnormalities. Death in early childhood may occur.</description>
        <dbReference type="MIM" id="620869"/>
    </disease>
    <text>The disease may be caused by variants affecting the gene represented in this entry.</text>
</comment>
<comment type="sequence caution" evidence="32">
    <conflict type="erroneous initiation">
        <sequence resource="EMBL-CDS" id="BAA05039"/>
    </conflict>
    <text>Truncated N-terminus.</text>
</comment>